<sequence>MINRNSGKDRDRSRSGDKELRINHRIKAREVRVIFNDGTQSVLPIEDAIKCARDVELDLVEISPNALPPVCKIIDYGKYKFHQEKRQKEQRKNQKIIKLKEVRMQPKIDTHDLDFKYKNILGFLKEGNKVKVTIRFRGRELAHTHLGYGILESILERVGDSNYVLESPAKMEGKTMFLIIAPKSRK</sequence>
<reference key="1">
    <citation type="journal article" date="2008" name="PLoS Genet.">
        <title>The genome of Borrelia recurrentis, the agent of deadly louse-borne relapsing fever, is a degraded subset of tick-borne Borrelia duttonii.</title>
        <authorList>
            <person name="Lescot M."/>
            <person name="Audic S."/>
            <person name="Robert C."/>
            <person name="Nguyen T.T."/>
            <person name="Blanc G."/>
            <person name="Cutler S.J."/>
            <person name="Wincker P."/>
            <person name="Couloux A."/>
            <person name="Claverie J.-M."/>
            <person name="Raoult D."/>
            <person name="Drancourt M."/>
        </authorList>
    </citation>
    <scope>NUCLEOTIDE SEQUENCE [LARGE SCALE GENOMIC DNA]</scope>
    <source>
        <strain>A1</strain>
    </source>
</reference>
<keyword id="KW-0963">Cytoplasm</keyword>
<keyword id="KW-0396">Initiation factor</keyword>
<keyword id="KW-0648">Protein biosynthesis</keyword>
<accession>B5RR09</accession>
<proteinExistence type="inferred from homology"/>
<name>IF3_BORRA</name>
<gene>
    <name evidence="1" type="primary">infC</name>
    <name type="ordered locus">BRE_188</name>
</gene>
<feature type="chain" id="PRO_1000092773" description="Translation initiation factor IF-3">
    <location>
        <begin position="1"/>
        <end position="186"/>
    </location>
</feature>
<feature type="region of interest" description="Disordered" evidence="2">
    <location>
        <begin position="1"/>
        <end position="20"/>
    </location>
</feature>
<protein>
    <recommendedName>
        <fullName evidence="1">Translation initiation factor IF-3</fullName>
    </recommendedName>
</protein>
<evidence type="ECO:0000255" key="1">
    <source>
        <dbReference type="HAMAP-Rule" id="MF_00080"/>
    </source>
</evidence>
<evidence type="ECO:0000256" key="2">
    <source>
        <dbReference type="SAM" id="MobiDB-lite"/>
    </source>
</evidence>
<dbReference type="EMBL" id="CP000993">
    <property type="protein sequence ID" value="ACH94443.1"/>
    <property type="molecule type" value="Genomic_DNA"/>
</dbReference>
<dbReference type="RefSeq" id="WP_012537957.1">
    <property type="nucleotide sequence ID" value="NZ_CP169983.1"/>
</dbReference>
<dbReference type="SMR" id="B5RR09"/>
<dbReference type="KEGG" id="bre:BRE_188"/>
<dbReference type="HOGENOM" id="CLU_054919_3_2_12"/>
<dbReference type="Proteomes" id="UP000000612">
    <property type="component" value="Chromosome"/>
</dbReference>
<dbReference type="GO" id="GO:0005829">
    <property type="term" value="C:cytosol"/>
    <property type="evidence" value="ECO:0007669"/>
    <property type="project" value="TreeGrafter"/>
</dbReference>
<dbReference type="GO" id="GO:0016020">
    <property type="term" value="C:membrane"/>
    <property type="evidence" value="ECO:0007669"/>
    <property type="project" value="TreeGrafter"/>
</dbReference>
<dbReference type="GO" id="GO:0043022">
    <property type="term" value="F:ribosome binding"/>
    <property type="evidence" value="ECO:0007669"/>
    <property type="project" value="TreeGrafter"/>
</dbReference>
<dbReference type="GO" id="GO:0003743">
    <property type="term" value="F:translation initiation factor activity"/>
    <property type="evidence" value="ECO:0007669"/>
    <property type="project" value="UniProtKB-UniRule"/>
</dbReference>
<dbReference type="GO" id="GO:0032790">
    <property type="term" value="P:ribosome disassembly"/>
    <property type="evidence" value="ECO:0007669"/>
    <property type="project" value="TreeGrafter"/>
</dbReference>
<dbReference type="FunFam" id="3.10.20.80:FF:000001">
    <property type="entry name" value="Translation initiation factor IF-3"/>
    <property type="match status" value="1"/>
</dbReference>
<dbReference type="FunFam" id="3.30.110.10:FF:000001">
    <property type="entry name" value="Translation initiation factor IF-3"/>
    <property type="match status" value="1"/>
</dbReference>
<dbReference type="Gene3D" id="3.30.110.10">
    <property type="entry name" value="Translation initiation factor 3 (IF-3), C-terminal domain"/>
    <property type="match status" value="1"/>
</dbReference>
<dbReference type="Gene3D" id="3.10.20.80">
    <property type="entry name" value="Translation initiation factor 3 (IF-3), N-terminal domain"/>
    <property type="match status" value="1"/>
</dbReference>
<dbReference type="HAMAP" id="MF_00080">
    <property type="entry name" value="IF_3"/>
    <property type="match status" value="1"/>
</dbReference>
<dbReference type="InterPro" id="IPR036788">
    <property type="entry name" value="T_IF-3_C_sf"/>
</dbReference>
<dbReference type="InterPro" id="IPR036787">
    <property type="entry name" value="T_IF-3_N_sf"/>
</dbReference>
<dbReference type="InterPro" id="IPR019813">
    <property type="entry name" value="Translation_initiation_fac3_CS"/>
</dbReference>
<dbReference type="InterPro" id="IPR001288">
    <property type="entry name" value="Translation_initiation_fac_3"/>
</dbReference>
<dbReference type="InterPro" id="IPR019815">
    <property type="entry name" value="Translation_initiation_fac_3_C"/>
</dbReference>
<dbReference type="InterPro" id="IPR019814">
    <property type="entry name" value="Translation_initiation_fac_3_N"/>
</dbReference>
<dbReference type="NCBIfam" id="TIGR00168">
    <property type="entry name" value="infC"/>
    <property type="match status" value="1"/>
</dbReference>
<dbReference type="PANTHER" id="PTHR10938">
    <property type="entry name" value="TRANSLATION INITIATION FACTOR IF-3"/>
    <property type="match status" value="1"/>
</dbReference>
<dbReference type="PANTHER" id="PTHR10938:SF0">
    <property type="entry name" value="TRANSLATION INITIATION FACTOR IF-3, MITOCHONDRIAL"/>
    <property type="match status" value="1"/>
</dbReference>
<dbReference type="Pfam" id="PF00707">
    <property type="entry name" value="IF3_C"/>
    <property type="match status" value="1"/>
</dbReference>
<dbReference type="Pfam" id="PF05198">
    <property type="entry name" value="IF3_N"/>
    <property type="match status" value="1"/>
</dbReference>
<dbReference type="SUPFAM" id="SSF55200">
    <property type="entry name" value="Translation initiation factor IF3, C-terminal domain"/>
    <property type="match status" value="1"/>
</dbReference>
<dbReference type="SUPFAM" id="SSF54364">
    <property type="entry name" value="Translation initiation factor IF3, N-terminal domain"/>
    <property type="match status" value="1"/>
</dbReference>
<dbReference type="PROSITE" id="PS00938">
    <property type="entry name" value="IF3"/>
    <property type="match status" value="1"/>
</dbReference>
<comment type="function">
    <text evidence="1">IF-3 binds to the 30S ribosomal subunit and shifts the equilibrium between 70S ribosomes and their 50S and 30S subunits in favor of the free subunits, thus enhancing the availability of 30S subunits on which protein synthesis initiation begins.</text>
</comment>
<comment type="subunit">
    <text evidence="1">Monomer.</text>
</comment>
<comment type="subcellular location">
    <subcellularLocation>
        <location evidence="1">Cytoplasm</location>
    </subcellularLocation>
</comment>
<comment type="similarity">
    <text evidence="1">Belongs to the IF-3 family.</text>
</comment>
<organism>
    <name type="scientific">Borrelia recurrentis (strain A1)</name>
    <dbReference type="NCBI Taxonomy" id="412418"/>
    <lineage>
        <taxon>Bacteria</taxon>
        <taxon>Pseudomonadati</taxon>
        <taxon>Spirochaetota</taxon>
        <taxon>Spirochaetia</taxon>
        <taxon>Spirochaetales</taxon>
        <taxon>Borreliaceae</taxon>
        <taxon>Borrelia</taxon>
    </lineage>
</organism>